<comment type="catalytic activity">
    <reaction>
        <text>ATP + H2O = ADP + phosphate + H(+)</text>
        <dbReference type="Rhea" id="RHEA:13065"/>
        <dbReference type="ChEBI" id="CHEBI:15377"/>
        <dbReference type="ChEBI" id="CHEBI:15378"/>
        <dbReference type="ChEBI" id="CHEBI:30616"/>
        <dbReference type="ChEBI" id="CHEBI:43474"/>
        <dbReference type="ChEBI" id="CHEBI:456216"/>
        <dbReference type="EC" id="3.6.4.13"/>
    </reaction>
</comment>
<comment type="domain">
    <text>The Q motif is unique to and characteristic of the DEAD box family of RNA helicases and controls ATP binding and hydrolysis.</text>
</comment>
<comment type="similarity">
    <text evidence="4">Belongs to the DEAD box helicase family. DDX24/MAK5 subfamily.</text>
</comment>
<proteinExistence type="evidence at transcript level"/>
<feature type="chain" id="PRO_0000282483" description="DEAD-box ATP-dependent RNA helicase 13">
    <location>
        <begin position="1"/>
        <end position="832"/>
    </location>
</feature>
<feature type="domain" description="Helicase ATP-binding" evidence="1">
    <location>
        <begin position="230"/>
        <end position="447"/>
    </location>
</feature>
<feature type="domain" description="Helicase C-terminal" evidence="2">
    <location>
        <begin position="484"/>
        <end position="645"/>
    </location>
</feature>
<feature type="region of interest" description="Disordered" evidence="3">
    <location>
        <begin position="1"/>
        <end position="59"/>
    </location>
</feature>
<feature type="region of interest" description="Disordered" evidence="3">
    <location>
        <begin position="91"/>
        <end position="173"/>
    </location>
</feature>
<feature type="region of interest" description="Disordered" evidence="3">
    <location>
        <begin position="800"/>
        <end position="832"/>
    </location>
</feature>
<feature type="short sequence motif" description="Q motif">
    <location>
        <begin position="198"/>
        <end position="226"/>
    </location>
</feature>
<feature type="short sequence motif" description="DEAD box">
    <location>
        <begin position="371"/>
        <end position="374"/>
    </location>
</feature>
<feature type="compositionally biased region" description="Pro residues" evidence="3">
    <location>
        <begin position="1"/>
        <end position="12"/>
    </location>
</feature>
<feature type="compositionally biased region" description="Basic residues" evidence="3">
    <location>
        <begin position="29"/>
        <end position="42"/>
    </location>
</feature>
<feature type="compositionally biased region" description="Low complexity" evidence="3">
    <location>
        <begin position="43"/>
        <end position="55"/>
    </location>
</feature>
<feature type="compositionally biased region" description="Basic residues" evidence="3">
    <location>
        <begin position="105"/>
        <end position="114"/>
    </location>
</feature>
<feature type="compositionally biased region" description="Acidic residues" evidence="3">
    <location>
        <begin position="128"/>
        <end position="137"/>
    </location>
</feature>
<feature type="compositionally biased region" description="Basic residues" evidence="3">
    <location>
        <begin position="141"/>
        <end position="155"/>
    </location>
</feature>
<feature type="compositionally biased region" description="Basic and acidic residues" evidence="3">
    <location>
        <begin position="156"/>
        <end position="167"/>
    </location>
</feature>
<feature type="compositionally biased region" description="Basic and acidic residues" evidence="3">
    <location>
        <begin position="814"/>
        <end position="832"/>
    </location>
</feature>
<feature type="binding site" evidence="1">
    <location>
        <begin position="243"/>
        <end position="250"/>
    </location>
    <ligand>
        <name>ATP</name>
        <dbReference type="ChEBI" id="CHEBI:30616"/>
    </ligand>
</feature>
<feature type="sequence conflict" description="In Ref. 6; AK072655." evidence="4" ref="6">
    <original>E</original>
    <variation>G</variation>
    <location>
        <position position="131"/>
    </location>
</feature>
<feature type="sequence conflict" description="In Ref. 6; AK072655." evidence="4" ref="6">
    <original>N</original>
    <variation>D</variation>
    <location>
        <position position="180"/>
    </location>
</feature>
<feature type="sequence conflict" description="In Ref. 6; AK072655." evidence="4" ref="6">
    <original>N</original>
    <variation>H</variation>
    <location>
        <position position="187"/>
    </location>
</feature>
<feature type="sequence conflict" description="In Ref. 6; AK072655." evidence="4" ref="6">
    <original>R</original>
    <variation>K</variation>
    <location>
        <position position="204"/>
    </location>
</feature>
<feature type="sequence conflict" description="In Ref. 6; AK072655." evidence="4" ref="6">
    <original>I</original>
    <variation>M</variation>
    <location>
        <position position="240"/>
    </location>
</feature>
<feature type="sequence conflict" description="In Ref. 6; AK072655." evidence="4" ref="6">
    <original>F</original>
    <variation>L</variation>
    <location>
        <position position="253"/>
    </location>
</feature>
<feature type="sequence conflict" description="In Ref. 6; AK072655." evidence="4" ref="6">
    <original>S</original>
    <variation>F</variation>
    <location>
        <position position="283"/>
    </location>
</feature>
<feature type="sequence conflict" description="In Ref. 6; AK072655." evidence="4" ref="6">
    <original>I</original>
    <variation>L</variation>
    <location>
        <position position="321"/>
    </location>
</feature>
<feature type="sequence conflict" description="In Ref. 6; AK072655." evidence="4" ref="6">
    <original>Q</original>
    <variation>P</variation>
    <location>
        <position position="357"/>
    </location>
</feature>
<feature type="sequence conflict" description="In Ref. 6; AK072655." evidence="4" ref="6">
    <original>Q</original>
    <variation>P</variation>
    <location>
        <position position="386"/>
    </location>
</feature>
<feature type="sequence conflict" description="In Ref. 6; AK072655." evidence="4" ref="6">
    <original>Q</original>
    <variation>P</variation>
    <location>
        <position position="401"/>
    </location>
</feature>
<feature type="sequence conflict" description="In Ref. 6; AK072655." evidence="4" ref="6">
    <original>C</original>
    <variation>G</variation>
    <location>
        <position position="409"/>
    </location>
</feature>
<feature type="sequence conflict" description="In Ref. 6; AK072655." evidence="4" ref="6">
    <original>D</original>
    <variation>Y</variation>
    <location>
        <position position="498"/>
    </location>
</feature>
<feature type="sequence conflict" description="In Ref. 6; AK072655." evidence="4" ref="6">
    <original>F</original>
    <variation>S</variation>
    <location>
        <position position="728"/>
    </location>
</feature>
<accession>A3AVH5</accession>
<accession>A0A0N7KJC5</accession>
<accession>Q01HE8</accession>
<accession>Q7XQ07</accession>
<dbReference type="EC" id="3.6.4.13"/>
<dbReference type="EMBL" id="AL606607">
    <property type="protein sequence ID" value="CAE03369.1"/>
    <property type="molecule type" value="Genomic_DNA"/>
</dbReference>
<dbReference type="EMBL" id="AP008210">
    <property type="protein sequence ID" value="BAF15200.1"/>
    <property type="molecule type" value="Genomic_DNA"/>
</dbReference>
<dbReference type="EMBL" id="AP014960">
    <property type="protein sequence ID" value="BAS90033.1"/>
    <property type="molecule type" value="Genomic_DNA"/>
</dbReference>
<dbReference type="EMBL" id="CM000141">
    <property type="status" value="NOT_ANNOTATED_CDS"/>
    <property type="molecule type" value="Genomic_DNA"/>
</dbReference>
<dbReference type="EMBL" id="AK072655">
    <property type="status" value="NOT_ANNOTATED_CDS"/>
    <property type="molecule type" value="mRNA"/>
</dbReference>
<dbReference type="RefSeq" id="XP_015635675.1">
    <property type="nucleotide sequence ID" value="XM_015780189.1"/>
</dbReference>
<dbReference type="SMR" id="A3AVH5"/>
<dbReference type="FunCoup" id="A3AVH5">
    <property type="interactions" value="2641"/>
</dbReference>
<dbReference type="STRING" id="39947.A3AVH5"/>
<dbReference type="PaxDb" id="39947-A3AVH5"/>
<dbReference type="EnsemblPlants" id="Os04t0510400-01">
    <property type="protein sequence ID" value="Os04t0510400-01"/>
    <property type="gene ID" value="Os04g0510400"/>
</dbReference>
<dbReference type="Gramene" id="Os04t0510400-01">
    <property type="protein sequence ID" value="Os04t0510400-01"/>
    <property type="gene ID" value="Os04g0510400"/>
</dbReference>
<dbReference type="KEGG" id="dosa:Os04g0510400"/>
<dbReference type="eggNOG" id="KOG0347">
    <property type="taxonomic scope" value="Eukaryota"/>
</dbReference>
<dbReference type="HOGENOM" id="CLU_003041_13_0_1"/>
<dbReference type="InParanoid" id="A3AVH5"/>
<dbReference type="OMA" id="QMIQKAR"/>
<dbReference type="OrthoDB" id="4310724at2759"/>
<dbReference type="Proteomes" id="UP000000763">
    <property type="component" value="Chromosome 4"/>
</dbReference>
<dbReference type="Proteomes" id="UP000007752">
    <property type="component" value="Chromosome 4"/>
</dbReference>
<dbReference type="Proteomes" id="UP000059680">
    <property type="component" value="Chromosome 4"/>
</dbReference>
<dbReference type="ExpressionAtlas" id="A3AVH5">
    <property type="expression patterns" value="baseline and differential"/>
</dbReference>
<dbReference type="GO" id="GO:0005730">
    <property type="term" value="C:nucleolus"/>
    <property type="evidence" value="ECO:0000318"/>
    <property type="project" value="GO_Central"/>
</dbReference>
<dbReference type="GO" id="GO:0005524">
    <property type="term" value="F:ATP binding"/>
    <property type="evidence" value="ECO:0007669"/>
    <property type="project" value="UniProtKB-KW"/>
</dbReference>
<dbReference type="GO" id="GO:0016887">
    <property type="term" value="F:ATP hydrolysis activity"/>
    <property type="evidence" value="ECO:0007669"/>
    <property type="project" value="RHEA"/>
</dbReference>
<dbReference type="GO" id="GO:0003723">
    <property type="term" value="F:RNA binding"/>
    <property type="evidence" value="ECO:0007669"/>
    <property type="project" value="UniProtKB-KW"/>
</dbReference>
<dbReference type="GO" id="GO:0003724">
    <property type="term" value="F:RNA helicase activity"/>
    <property type="evidence" value="ECO:0007669"/>
    <property type="project" value="UniProtKB-EC"/>
</dbReference>
<dbReference type="CDD" id="cd17946">
    <property type="entry name" value="DEADc_DDX24"/>
    <property type="match status" value="1"/>
</dbReference>
<dbReference type="CDD" id="cd18787">
    <property type="entry name" value="SF2_C_DEAD"/>
    <property type="match status" value="1"/>
</dbReference>
<dbReference type="Gene3D" id="3.40.50.300">
    <property type="entry name" value="P-loop containing nucleotide triphosphate hydrolases"/>
    <property type="match status" value="2"/>
</dbReference>
<dbReference type="InterPro" id="IPR011545">
    <property type="entry name" value="DEAD/DEAH_box_helicase_dom"/>
</dbReference>
<dbReference type="InterPro" id="IPR014001">
    <property type="entry name" value="Helicase_ATP-bd"/>
</dbReference>
<dbReference type="InterPro" id="IPR001650">
    <property type="entry name" value="Helicase_C-like"/>
</dbReference>
<dbReference type="InterPro" id="IPR027417">
    <property type="entry name" value="P-loop_NTPase"/>
</dbReference>
<dbReference type="InterPro" id="IPR000629">
    <property type="entry name" value="RNA-helicase_DEAD-box_CS"/>
</dbReference>
<dbReference type="InterPro" id="IPR014014">
    <property type="entry name" value="RNA_helicase_DEAD_Q_motif"/>
</dbReference>
<dbReference type="PANTHER" id="PTHR24031">
    <property type="entry name" value="RNA HELICASE"/>
    <property type="match status" value="1"/>
</dbReference>
<dbReference type="Pfam" id="PF00270">
    <property type="entry name" value="DEAD"/>
    <property type="match status" value="1"/>
</dbReference>
<dbReference type="Pfam" id="PF00271">
    <property type="entry name" value="Helicase_C"/>
    <property type="match status" value="1"/>
</dbReference>
<dbReference type="SMART" id="SM00487">
    <property type="entry name" value="DEXDc"/>
    <property type="match status" value="1"/>
</dbReference>
<dbReference type="SMART" id="SM00490">
    <property type="entry name" value="HELICc"/>
    <property type="match status" value="1"/>
</dbReference>
<dbReference type="SUPFAM" id="SSF52540">
    <property type="entry name" value="P-loop containing nucleoside triphosphate hydrolases"/>
    <property type="match status" value="1"/>
</dbReference>
<dbReference type="PROSITE" id="PS00039">
    <property type="entry name" value="DEAD_ATP_HELICASE"/>
    <property type="match status" value="1"/>
</dbReference>
<dbReference type="PROSITE" id="PS51192">
    <property type="entry name" value="HELICASE_ATP_BIND_1"/>
    <property type="match status" value="1"/>
</dbReference>
<dbReference type="PROSITE" id="PS51194">
    <property type="entry name" value="HELICASE_CTER"/>
    <property type="match status" value="1"/>
</dbReference>
<dbReference type="PROSITE" id="PS51195">
    <property type="entry name" value="Q_MOTIF"/>
    <property type="match status" value="1"/>
</dbReference>
<name>RH13_ORYSJ</name>
<organism>
    <name type="scientific">Oryza sativa subsp. japonica</name>
    <name type="common">Rice</name>
    <dbReference type="NCBI Taxonomy" id="39947"/>
    <lineage>
        <taxon>Eukaryota</taxon>
        <taxon>Viridiplantae</taxon>
        <taxon>Streptophyta</taxon>
        <taxon>Embryophyta</taxon>
        <taxon>Tracheophyta</taxon>
        <taxon>Spermatophyta</taxon>
        <taxon>Magnoliopsida</taxon>
        <taxon>Liliopsida</taxon>
        <taxon>Poales</taxon>
        <taxon>Poaceae</taxon>
        <taxon>BOP clade</taxon>
        <taxon>Oryzoideae</taxon>
        <taxon>Oryzeae</taxon>
        <taxon>Oryzinae</taxon>
        <taxon>Oryza</taxon>
        <taxon>Oryza sativa</taxon>
    </lineage>
</organism>
<gene>
    <name type="ordered locus">Os04g0510400</name>
    <name type="ordered locus">LOC_Os04g43140</name>
    <name type="ORF">OsJ_014797</name>
    <name type="ORF">OSJNBb0065L13.12</name>
</gene>
<protein>
    <recommendedName>
        <fullName>DEAD-box ATP-dependent RNA helicase 13</fullName>
        <ecNumber>3.6.4.13</ecNumber>
    </recommendedName>
</protein>
<sequence>MAAAPPPPPPPQLQSSDPSTPPQETSQVRKGKKSRGAKKPRRAAAAAAASTSSAGTMVEDPFLVLAGGKEGGFLELEEIDEADFGIFGGAVEDLGEIDRKAGKDQKKKKRKKRKRGDDDYALPGDGDLVVECEEEGEKGEKRVKKKRRSRKKRKVKEMEEKMESKEDVSDDNVEDMQDGNDMEQDNNDGLILGEDEVYAWRELRLHPLLITAVRRLGFKEPTPIQKACFPAAAHQGKDVIGAAETGSGKTLAFGLPILQRLLEEQEKAMRLSREDESTQDENSRESPLRALILTPTRELAKQVCDHLKEAAKFLRIQVVPIVGGLSMEKQERLLKRKPEIVVGTPGRLWELMSTGNQHLIKLHSLSFFVLDEADRMIERGHFHELQSIIEMLPVTNGSDEQTVGTTPSCETVPILQIKKRQTFVFSATLALSANFRKKLKRGLVTAKASASTDLSSIEALSKQARMKPNAEIVDLTKASILPEKLEESFIECSDDDKDAYLYYILSVHGQGRTIIFCTSIAALRHLSSILRVLGINVLTNHAQMQQRARMKAVDRFRESENSILVATDGFARGMDFDDVRTVIHYQLPHSTDVYIHRSGRTARKSMAGCSIALISPADKAKFYSLCKSLSKENLQQFPVDHAYMPAVMNRLTLARQIDKITRKNSQENANKSWLQRNAESMGLLLETSDSEEERVQGHKQRKATSANLQKLQQDLSELLQRPLQPKTFSRRYLAGAGVSPLLQKQLEELSKRNVKGSASVNANKGSRFVVIGQDQIEPLQALQNSGQEVCVSIDKQREKRRLAENWRRKKQKEKKSTREQKRKEKRIAKERD</sequence>
<keyword id="KW-0067">ATP-binding</keyword>
<keyword id="KW-0347">Helicase</keyword>
<keyword id="KW-0378">Hydrolase</keyword>
<keyword id="KW-0547">Nucleotide-binding</keyword>
<keyword id="KW-1185">Reference proteome</keyword>
<keyword id="KW-0694">RNA-binding</keyword>
<evidence type="ECO:0000255" key="1">
    <source>
        <dbReference type="PROSITE-ProRule" id="PRU00541"/>
    </source>
</evidence>
<evidence type="ECO:0000255" key="2">
    <source>
        <dbReference type="PROSITE-ProRule" id="PRU00542"/>
    </source>
</evidence>
<evidence type="ECO:0000256" key="3">
    <source>
        <dbReference type="SAM" id="MobiDB-lite"/>
    </source>
</evidence>
<evidence type="ECO:0000305" key="4"/>
<reference key="1">
    <citation type="journal article" date="2002" name="Nature">
        <title>Sequence and analysis of rice chromosome 4.</title>
        <authorList>
            <person name="Feng Q."/>
            <person name="Zhang Y."/>
            <person name="Hao P."/>
            <person name="Wang S."/>
            <person name="Fu G."/>
            <person name="Huang Y."/>
            <person name="Li Y."/>
            <person name="Zhu J."/>
            <person name="Liu Y."/>
            <person name="Hu X."/>
            <person name="Jia P."/>
            <person name="Zhang Y."/>
            <person name="Zhao Q."/>
            <person name="Ying K."/>
            <person name="Yu S."/>
            <person name="Tang Y."/>
            <person name="Weng Q."/>
            <person name="Zhang L."/>
            <person name="Lu Y."/>
            <person name="Mu J."/>
            <person name="Lu Y."/>
            <person name="Zhang L.S."/>
            <person name="Yu Z."/>
            <person name="Fan D."/>
            <person name="Liu X."/>
            <person name="Lu T."/>
            <person name="Li C."/>
            <person name="Wu Y."/>
            <person name="Sun T."/>
            <person name="Lei H."/>
            <person name="Li T."/>
            <person name="Hu H."/>
            <person name="Guan J."/>
            <person name="Wu M."/>
            <person name="Zhang R."/>
            <person name="Zhou B."/>
            <person name="Chen Z."/>
            <person name="Chen L."/>
            <person name="Jin Z."/>
            <person name="Wang R."/>
            <person name="Yin H."/>
            <person name="Cai Z."/>
            <person name="Ren S."/>
            <person name="Lv G."/>
            <person name="Gu W."/>
            <person name="Zhu G."/>
            <person name="Tu Y."/>
            <person name="Jia J."/>
            <person name="Zhang Y."/>
            <person name="Chen J."/>
            <person name="Kang H."/>
            <person name="Chen X."/>
            <person name="Shao C."/>
            <person name="Sun Y."/>
            <person name="Hu Q."/>
            <person name="Zhang X."/>
            <person name="Zhang W."/>
            <person name="Wang L."/>
            <person name="Ding C."/>
            <person name="Sheng H."/>
            <person name="Gu J."/>
            <person name="Chen S."/>
            <person name="Ni L."/>
            <person name="Zhu F."/>
            <person name="Chen W."/>
            <person name="Lan L."/>
            <person name="Lai Y."/>
            <person name="Cheng Z."/>
            <person name="Gu M."/>
            <person name="Jiang J."/>
            <person name="Li J."/>
            <person name="Hong G."/>
            <person name="Xue Y."/>
            <person name="Han B."/>
        </authorList>
    </citation>
    <scope>NUCLEOTIDE SEQUENCE [LARGE SCALE GENOMIC DNA]</scope>
    <source>
        <strain>cv. Nipponbare</strain>
    </source>
</reference>
<reference key="2">
    <citation type="journal article" date="2005" name="Nature">
        <title>The map-based sequence of the rice genome.</title>
        <authorList>
            <consortium name="International rice genome sequencing project (IRGSP)"/>
        </authorList>
    </citation>
    <scope>NUCLEOTIDE SEQUENCE [LARGE SCALE GENOMIC DNA]</scope>
    <source>
        <strain>cv. Nipponbare</strain>
    </source>
</reference>
<reference key="3">
    <citation type="journal article" date="2008" name="Nucleic Acids Res.">
        <title>The rice annotation project database (RAP-DB): 2008 update.</title>
        <authorList>
            <consortium name="The rice annotation project (RAP)"/>
        </authorList>
    </citation>
    <scope>GENOME REANNOTATION</scope>
    <source>
        <strain>cv. Nipponbare</strain>
    </source>
</reference>
<reference key="4">
    <citation type="journal article" date="2013" name="Rice">
        <title>Improvement of the Oryza sativa Nipponbare reference genome using next generation sequence and optical map data.</title>
        <authorList>
            <person name="Kawahara Y."/>
            <person name="de la Bastide M."/>
            <person name="Hamilton J.P."/>
            <person name="Kanamori H."/>
            <person name="McCombie W.R."/>
            <person name="Ouyang S."/>
            <person name="Schwartz D.C."/>
            <person name="Tanaka T."/>
            <person name="Wu J."/>
            <person name="Zhou S."/>
            <person name="Childs K.L."/>
            <person name="Davidson R.M."/>
            <person name="Lin H."/>
            <person name="Quesada-Ocampo L."/>
            <person name="Vaillancourt B."/>
            <person name="Sakai H."/>
            <person name="Lee S.S."/>
            <person name="Kim J."/>
            <person name="Numa H."/>
            <person name="Itoh T."/>
            <person name="Buell C.R."/>
            <person name="Matsumoto T."/>
        </authorList>
    </citation>
    <scope>GENOME REANNOTATION</scope>
    <source>
        <strain>cv. Nipponbare</strain>
    </source>
</reference>
<reference key="5">
    <citation type="journal article" date="2005" name="PLoS Biol.">
        <title>The genomes of Oryza sativa: a history of duplications.</title>
        <authorList>
            <person name="Yu J."/>
            <person name="Wang J."/>
            <person name="Lin W."/>
            <person name="Li S."/>
            <person name="Li H."/>
            <person name="Zhou J."/>
            <person name="Ni P."/>
            <person name="Dong W."/>
            <person name="Hu S."/>
            <person name="Zeng C."/>
            <person name="Zhang J."/>
            <person name="Zhang Y."/>
            <person name="Li R."/>
            <person name="Xu Z."/>
            <person name="Li S."/>
            <person name="Li X."/>
            <person name="Zheng H."/>
            <person name="Cong L."/>
            <person name="Lin L."/>
            <person name="Yin J."/>
            <person name="Geng J."/>
            <person name="Li G."/>
            <person name="Shi J."/>
            <person name="Liu J."/>
            <person name="Lv H."/>
            <person name="Li J."/>
            <person name="Wang J."/>
            <person name="Deng Y."/>
            <person name="Ran L."/>
            <person name="Shi X."/>
            <person name="Wang X."/>
            <person name="Wu Q."/>
            <person name="Li C."/>
            <person name="Ren X."/>
            <person name="Wang J."/>
            <person name="Wang X."/>
            <person name="Li D."/>
            <person name="Liu D."/>
            <person name="Zhang X."/>
            <person name="Ji Z."/>
            <person name="Zhao W."/>
            <person name="Sun Y."/>
            <person name="Zhang Z."/>
            <person name="Bao J."/>
            <person name="Han Y."/>
            <person name="Dong L."/>
            <person name="Ji J."/>
            <person name="Chen P."/>
            <person name="Wu S."/>
            <person name="Liu J."/>
            <person name="Xiao Y."/>
            <person name="Bu D."/>
            <person name="Tan J."/>
            <person name="Yang L."/>
            <person name="Ye C."/>
            <person name="Zhang J."/>
            <person name="Xu J."/>
            <person name="Zhou Y."/>
            <person name="Yu Y."/>
            <person name="Zhang B."/>
            <person name="Zhuang S."/>
            <person name="Wei H."/>
            <person name="Liu B."/>
            <person name="Lei M."/>
            <person name="Yu H."/>
            <person name="Li Y."/>
            <person name="Xu H."/>
            <person name="Wei S."/>
            <person name="He X."/>
            <person name="Fang L."/>
            <person name="Zhang Z."/>
            <person name="Zhang Y."/>
            <person name="Huang X."/>
            <person name="Su Z."/>
            <person name="Tong W."/>
            <person name="Li J."/>
            <person name="Tong Z."/>
            <person name="Li S."/>
            <person name="Ye J."/>
            <person name="Wang L."/>
            <person name="Fang L."/>
            <person name="Lei T."/>
            <person name="Chen C.-S."/>
            <person name="Chen H.-C."/>
            <person name="Xu Z."/>
            <person name="Li H."/>
            <person name="Huang H."/>
            <person name="Zhang F."/>
            <person name="Xu H."/>
            <person name="Li N."/>
            <person name="Zhao C."/>
            <person name="Li S."/>
            <person name="Dong L."/>
            <person name="Huang Y."/>
            <person name="Li L."/>
            <person name="Xi Y."/>
            <person name="Qi Q."/>
            <person name="Li W."/>
            <person name="Zhang B."/>
            <person name="Hu W."/>
            <person name="Zhang Y."/>
            <person name="Tian X."/>
            <person name="Jiao Y."/>
            <person name="Liang X."/>
            <person name="Jin J."/>
            <person name="Gao L."/>
            <person name="Zheng W."/>
            <person name="Hao B."/>
            <person name="Liu S.-M."/>
            <person name="Wang W."/>
            <person name="Yuan L."/>
            <person name="Cao M."/>
            <person name="McDermott J."/>
            <person name="Samudrala R."/>
            <person name="Wang J."/>
            <person name="Wong G.K.-S."/>
            <person name="Yang H."/>
        </authorList>
    </citation>
    <scope>NUCLEOTIDE SEQUENCE [LARGE SCALE GENOMIC DNA]</scope>
    <source>
        <strain>cv. Nipponbare</strain>
    </source>
</reference>
<reference key="6">
    <citation type="journal article" date="2003" name="Science">
        <title>Collection, mapping, and annotation of over 28,000 cDNA clones from japonica rice.</title>
        <authorList>
            <consortium name="The rice full-length cDNA consortium"/>
        </authorList>
    </citation>
    <scope>NUCLEOTIDE SEQUENCE [LARGE SCALE MRNA]</scope>
    <source>
        <strain>cv. Nipponbare</strain>
    </source>
</reference>